<comment type="function">
    <text evidence="1">Secreted subtilisin-like serine protease with keratinolytic activity that contributes to pathogenicity.</text>
</comment>
<comment type="subcellular location">
    <subcellularLocation>
        <location evidence="1">Secreted</location>
    </subcellularLocation>
</comment>
<comment type="induction">
    <text evidence="5">Expression is up-regulated during infection.</text>
</comment>
<comment type="similarity">
    <text evidence="6">Belongs to the peptidase S8 family.</text>
</comment>
<comment type="sequence caution" evidence="6">
    <conflict type="erroneous initiation">
        <sequence resource="EMBL-CDS" id="EFE36008"/>
    </conflict>
    <text>Extended N-terminus.</text>
</comment>
<feature type="signal peptide" evidence="2">
    <location>
        <begin position="1"/>
        <end position="19"/>
    </location>
</feature>
<feature type="propeptide" id="PRO_0000397778" evidence="1">
    <location>
        <begin position="20"/>
        <end position="116"/>
    </location>
</feature>
<feature type="chain" id="PRO_0000397779" description="Subtilisin-like protease 1">
    <location>
        <begin position="117"/>
        <end position="533"/>
    </location>
</feature>
<feature type="domain" description="Inhibitor I9" evidence="2">
    <location>
        <begin position="34"/>
        <end position="115"/>
    </location>
</feature>
<feature type="domain" description="Peptidase S8" evidence="3">
    <location>
        <begin position="126"/>
        <end position="400"/>
    </location>
</feature>
<feature type="region of interest" description="Disordered" evidence="4">
    <location>
        <begin position="175"/>
        <end position="198"/>
    </location>
</feature>
<feature type="region of interest" description="Disordered" evidence="4">
    <location>
        <begin position="282"/>
        <end position="312"/>
    </location>
</feature>
<feature type="region of interest" description="Disordered" evidence="4">
    <location>
        <begin position="378"/>
        <end position="512"/>
    </location>
</feature>
<feature type="compositionally biased region" description="Polar residues" evidence="4">
    <location>
        <begin position="282"/>
        <end position="294"/>
    </location>
</feature>
<feature type="compositionally biased region" description="Polar residues" evidence="4">
    <location>
        <begin position="378"/>
        <end position="394"/>
    </location>
</feature>
<feature type="compositionally biased region" description="Pro residues" evidence="4">
    <location>
        <begin position="405"/>
        <end position="470"/>
    </location>
</feature>
<feature type="compositionally biased region" description="Low complexity" evidence="4">
    <location>
        <begin position="471"/>
        <end position="487"/>
    </location>
</feature>
<feature type="compositionally biased region" description="Pro residues" evidence="4">
    <location>
        <begin position="488"/>
        <end position="502"/>
    </location>
</feature>
<feature type="active site" description="Charge relay system" evidence="3">
    <location>
        <position position="158"/>
    </location>
</feature>
<feature type="active site" description="Charge relay system" evidence="3">
    <location>
        <position position="190"/>
    </location>
</feature>
<feature type="active site" description="Charge relay system" evidence="3">
    <location>
        <position position="345"/>
    </location>
</feature>
<feature type="glycosylation site" description="N-linked (GlcNAc...) asparagine" evidence="2">
    <location>
        <position position="233"/>
    </location>
</feature>
<feature type="glycosylation site" description="N-linked (GlcNAc...) asparagine" evidence="2">
    <location>
        <position position="251"/>
    </location>
</feature>
<dbReference type="EC" id="3.4.21.-"/>
<dbReference type="EMBL" id="ABSU01000002">
    <property type="protein sequence ID" value="EFE36008.1"/>
    <property type="status" value="ALT_INIT"/>
    <property type="molecule type" value="Genomic_DNA"/>
</dbReference>
<dbReference type="RefSeq" id="XP_003016653.1">
    <property type="nucleotide sequence ID" value="XM_003016607.1"/>
</dbReference>
<dbReference type="SMR" id="D4AKU9"/>
<dbReference type="GlyCosmos" id="D4AKU9">
    <property type="glycosylation" value="2 sites, No reported glycans"/>
</dbReference>
<dbReference type="GeneID" id="9522137"/>
<dbReference type="KEGG" id="abe:ARB_04944"/>
<dbReference type="eggNOG" id="KOG1153">
    <property type="taxonomic scope" value="Eukaryota"/>
</dbReference>
<dbReference type="HOGENOM" id="CLU_011263_1_5_1"/>
<dbReference type="OrthoDB" id="206201at2759"/>
<dbReference type="Proteomes" id="UP000008866">
    <property type="component" value="Unassembled WGS sequence"/>
</dbReference>
<dbReference type="GO" id="GO:0005576">
    <property type="term" value="C:extracellular region"/>
    <property type="evidence" value="ECO:0007669"/>
    <property type="project" value="UniProtKB-SubCell"/>
</dbReference>
<dbReference type="GO" id="GO:0004252">
    <property type="term" value="F:serine-type endopeptidase activity"/>
    <property type="evidence" value="ECO:0007669"/>
    <property type="project" value="InterPro"/>
</dbReference>
<dbReference type="GO" id="GO:0006508">
    <property type="term" value="P:proteolysis"/>
    <property type="evidence" value="ECO:0007669"/>
    <property type="project" value="UniProtKB-KW"/>
</dbReference>
<dbReference type="CDD" id="cd04077">
    <property type="entry name" value="Peptidases_S8_PCSK9_ProteinaseK_like"/>
    <property type="match status" value="1"/>
</dbReference>
<dbReference type="FunFam" id="3.40.50.200:FF:000014">
    <property type="entry name" value="Proteinase K"/>
    <property type="match status" value="1"/>
</dbReference>
<dbReference type="Gene3D" id="3.30.70.80">
    <property type="entry name" value="Peptidase S8 propeptide/proteinase inhibitor I9"/>
    <property type="match status" value="1"/>
</dbReference>
<dbReference type="Gene3D" id="3.40.50.200">
    <property type="entry name" value="Peptidase S8/S53 domain"/>
    <property type="match status" value="1"/>
</dbReference>
<dbReference type="InterPro" id="IPR034193">
    <property type="entry name" value="PCSK9_ProteinaseK-like"/>
</dbReference>
<dbReference type="InterPro" id="IPR000209">
    <property type="entry name" value="Peptidase_S8/S53_dom"/>
</dbReference>
<dbReference type="InterPro" id="IPR036852">
    <property type="entry name" value="Peptidase_S8/S53_dom_sf"/>
</dbReference>
<dbReference type="InterPro" id="IPR023828">
    <property type="entry name" value="Peptidase_S8_Ser-AS"/>
</dbReference>
<dbReference type="InterPro" id="IPR050131">
    <property type="entry name" value="Peptidase_S8_subtilisin-like"/>
</dbReference>
<dbReference type="InterPro" id="IPR015500">
    <property type="entry name" value="Peptidase_S8_subtilisin-rel"/>
</dbReference>
<dbReference type="InterPro" id="IPR010259">
    <property type="entry name" value="S8pro/Inhibitor_I9"/>
</dbReference>
<dbReference type="InterPro" id="IPR037045">
    <property type="entry name" value="S8pro/Inhibitor_I9_sf"/>
</dbReference>
<dbReference type="PANTHER" id="PTHR43806:SF58">
    <property type="entry name" value="ALKALINE PROTEASE 1-RELATED"/>
    <property type="match status" value="1"/>
</dbReference>
<dbReference type="PANTHER" id="PTHR43806">
    <property type="entry name" value="PEPTIDASE S8"/>
    <property type="match status" value="1"/>
</dbReference>
<dbReference type="Pfam" id="PF05922">
    <property type="entry name" value="Inhibitor_I9"/>
    <property type="match status" value="1"/>
</dbReference>
<dbReference type="Pfam" id="PF00082">
    <property type="entry name" value="Peptidase_S8"/>
    <property type="match status" value="1"/>
</dbReference>
<dbReference type="PRINTS" id="PR00723">
    <property type="entry name" value="SUBTILISIN"/>
</dbReference>
<dbReference type="SUPFAM" id="SSF54897">
    <property type="entry name" value="Protease propeptides/inhibitors"/>
    <property type="match status" value="1"/>
</dbReference>
<dbReference type="SUPFAM" id="SSF52743">
    <property type="entry name" value="Subtilisin-like"/>
    <property type="match status" value="1"/>
</dbReference>
<dbReference type="PROSITE" id="PS51892">
    <property type="entry name" value="SUBTILASE"/>
    <property type="match status" value="1"/>
</dbReference>
<dbReference type="PROSITE" id="PS00138">
    <property type="entry name" value="SUBTILASE_SER"/>
    <property type="match status" value="1"/>
</dbReference>
<proteinExistence type="evidence at transcript level"/>
<accession>D4AKU9</accession>
<reference key="1">
    <citation type="journal article" date="2011" name="Genome Biol.">
        <title>Comparative and functional genomics provide insights into the pathogenicity of dermatophytic fungi.</title>
        <authorList>
            <person name="Burmester A."/>
            <person name="Shelest E."/>
            <person name="Gloeckner G."/>
            <person name="Heddergott C."/>
            <person name="Schindler S."/>
            <person name="Staib P."/>
            <person name="Heidel A."/>
            <person name="Felder M."/>
            <person name="Petzold A."/>
            <person name="Szafranski K."/>
            <person name="Feuermann M."/>
            <person name="Pedruzzi I."/>
            <person name="Priebe S."/>
            <person name="Groth M."/>
            <person name="Winkler R."/>
            <person name="Li W."/>
            <person name="Kniemeyer O."/>
            <person name="Schroeckh V."/>
            <person name="Hertweck C."/>
            <person name="Hube B."/>
            <person name="White T.C."/>
            <person name="Platzer M."/>
            <person name="Guthke R."/>
            <person name="Heitman J."/>
            <person name="Woestemeyer J."/>
            <person name="Zipfel P.F."/>
            <person name="Monod M."/>
            <person name="Brakhage A.A."/>
        </authorList>
    </citation>
    <scope>NUCLEOTIDE SEQUENCE [LARGE SCALE GENOMIC DNA]</scope>
    <source>
        <strain>ATCC MYA-4681 / CBS 112371</strain>
    </source>
</reference>
<reference key="2">
    <citation type="journal article" date="2010" name="Microbiology">
        <title>Differential gene expression in the pathogenic dermatophyte Arthroderma benhamiae in vitro versus during infection.</title>
        <authorList>
            <person name="Staib P."/>
            <person name="Zaugg C."/>
            <person name="Mignon B."/>
            <person name="Weber J."/>
            <person name="Grumbt M."/>
            <person name="Pradervand S."/>
            <person name="Harshman K."/>
            <person name="Monod M."/>
        </authorList>
    </citation>
    <scope>INDUCTION</scope>
</reference>
<gene>
    <name type="primary">SUB1</name>
    <name type="ORF">ARB_04944</name>
</gene>
<name>SUB1_ARTBC</name>
<evidence type="ECO:0000250" key="1"/>
<evidence type="ECO:0000255" key="2"/>
<evidence type="ECO:0000255" key="3">
    <source>
        <dbReference type="PROSITE-ProRule" id="PRU01240"/>
    </source>
</evidence>
<evidence type="ECO:0000256" key="4">
    <source>
        <dbReference type="SAM" id="MobiDB-lite"/>
    </source>
</evidence>
<evidence type="ECO:0000269" key="5">
    <source>
    </source>
</evidence>
<evidence type="ECO:0000305" key="6"/>
<keyword id="KW-0325">Glycoprotein</keyword>
<keyword id="KW-0378">Hydrolase</keyword>
<keyword id="KW-0645">Protease</keyword>
<keyword id="KW-1185">Reference proteome</keyword>
<keyword id="KW-0964">Secreted</keyword>
<keyword id="KW-0720">Serine protease</keyword>
<keyword id="KW-0732">Signal</keyword>
<keyword id="KW-0843">Virulence</keyword>
<keyword id="KW-0865">Zymogen</keyword>
<sequence>MGVFRFISISLAAVSAANAAQILSMPHAQTVPNSYIVMMKDDTSDDDFNHHQSWLQSTHTHNITRRATIQNAGMRHKYNFSKMKGYSGIFDEETIKDIAKDPKVMFVEPDTIISVHGKVEQSNVPSWGLARISNPQPGAGSYIYDSSAGEGITVYSVDTGVDVNHEDFEGRAIWGSNQVNDGDDRDGSGHGTHTSGTMVGKEFGIAKKAKLVAVKVLGNDGSGPTSGIVAGINWSVEHARQNGGTKKAVMNMSLGGSSSSALNRAAAQAVEQGMFLSVAAGNDNQDAQSSSPASEPSVCTVGSSAEDDSRSSFSNWGPAIDLFAPGSNIISARPGGGSQSMSGTSMAAPHVAGLAAYLMALEGISGGAVCDRLKELGTSSITDAGPGTPTNVLINNGGAKGGKPNPNPAPSPSPSPSQPSEPQQPTPSQPGQPGEPFPGEPQQPTPSQPGQPGEPFPGEPFPGEPFPGEPFPGESFPGESFPGESAPAPAPMPPSPQHPHTPYPGGDNFDFDGLWKKYFGGEHWRKMFSSFWN</sequence>
<protein>
    <recommendedName>
        <fullName>Subtilisin-like protease 1</fullName>
        <ecNumber>3.4.21.-</ecNumber>
    </recommendedName>
</protein>
<organism>
    <name type="scientific">Arthroderma benhamiae (strain ATCC MYA-4681 / CBS 112371)</name>
    <name type="common">Trichophyton mentagrophytes</name>
    <dbReference type="NCBI Taxonomy" id="663331"/>
    <lineage>
        <taxon>Eukaryota</taxon>
        <taxon>Fungi</taxon>
        <taxon>Dikarya</taxon>
        <taxon>Ascomycota</taxon>
        <taxon>Pezizomycotina</taxon>
        <taxon>Eurotiomycetes</taxon>
        <taxon>Eurotiomycetidae</taxon>
        <taxon>Onygenales</taxon>
        <taxon>Arthrodermataceae</taxon>
        <taxon>Trichophyton</taxon>
    </lineage>
</organism>